<evidence type="ECO:0000255" key="1">
    <source>
        <dbReference type="HAMAP-Rule" id="MF_00033"/>
    </source>
</evidence>
<feature type="chain" id="PRO_0000315125" description="UDP-N-acetylglucosamine--N-acetylmuramyl-(pentapeptide) pyrophosphoryl-undecaprenol N-acetylglucosamine transferase">
    <location>
        <begin position="1"/>
        <end position="333"/>
    </location>
</feature>
<feature type="binding site" evidence="1">
    <location>
        <begin position="10"/>
        <end position="12"/>
    </location>
    <ligand>
        <name>UDP-N-acetyl-alpha-D-glucosamine</name>
        <dbReference type="ChEBI" id="CHEBI:57705"/>
    </ligand>
</feature>
<feature type="binding site" evidence="1">
    <location>
        <position position="124"/>
    </location>
    <ligand>
        <name>UDP-N-acetyl-alpha-D-glucosamine</name>
        <dbReference type="ChEBI" id="CHEBI:57705"/>
    </ligand>
</feature>
<feature type="binding site" evidence="1">
    <location>
        <position position="177"/>
    </location>
    <ligand>
        <name>UDP-N-acetyl-alpha-D-glucosamine</name>
        <dbReference type="ChEBI" id="CHEBI:57705"/>
    </ligand>
</feature>
<feature type="binding site" evidence="1">
    <location>
        <position position="275"/>
    </location>
    <ligand>
        <name>UDP-N-acetyl-alpha-D-glucosamine</name>
        <dbReference type="ChEBI" id="CHEBI:57705"/>
    </ligand>
</feature>
<accession>A6Q579</accession>
<dbReference type="EC" id="2.4.1.227" evidence="1"/>
<dbReference type="EMBL" id="AP009178">
    <property type="protein sequence ID" value="BAF70638.1"/>
    <property type="molecule type" value="Genomic_DNA"/>
</dbReference>
<dbReference type="RefSeq" id="WP_012082901.1">
    <property type="nucleotide sequence ID" value="NC_009662.1"/>
</dbReference>
<dbReference type="SMR" id="A6Q579"/>
<dbReference type="FunCoup" id="A6Q579">
    <property type="interactions" value="262"/>
</dbReference>
<dbReference type="STRING" id="387092.NIS_1531"/>
<dbReference type="CAZy" id="GT28">
    <property type="family name" value="Glycosyltransferase Family 28"/>
</dbReference>
<dbReference type="KEGG" id="nis:NIS_1531"/>
<dbReference type="eggNOG" id="COG0707">
    <property type="taxonomic scope" value="Bacteria"/>
</dbReference>
<dbReference type="HOGENOM" id="CLU_037404_2_1_7"/>
<dbReference type="InParanoid" id="A6Q579"/>
<dbReference type="OrthoDB" id="9808936at2"/>
<dbReference type="UniPathway" id="UPA00219"/>
<dbReference type="Proteomes" id="UP000001118">
    <property type="component" value="Chromosome"/>
</dbReference>
<dbReference type="GO" id="GO:0005886">
    <property type="term" value="C:plasma membrane"/>
    <property type="evidence" value="ECO:0007669"/>
    <property type="project" value="UniProtKB-SubCell"/>
</dbReference>
<dbReference type="GO" id="GO:0051991">
    <property type="term" value="F:UDP-N-acetyl-D-glucosamine:N-acetylmuramoyl-L-alanyl-D-glutamyl-meso-2,6-diaminopimelyl-D-alanyl-D-alanine-diphosphoundecaprenol 4-beta-N-acetylglucosaminlytransferase activity"/>
    <property type="evidence" value="ECO:0007669"/>
    <property type="project" value="RHEA"/>
</dbReference>
<dbReference type="GO" id="GO:0050511">
    <property type="term" value="F:undecaprenyldiphospho-muramoylpentapeptide beta-N-acetylglucosaminyltransferase activity"/>
    <property type="evidence" value="ECO:0007669"/>
    <property type="project" value="UniProtKB-UniRule"/>
</dbReference>
<dbReference type="GO" id="GO:0005975">
    <property type="term" value="P:carbohydrate metabolic process"/>
    <property type="evidence" value="ECO:0007669"/>
    <property type="project" value="InterPro"/>
</dbReference>
<dbReference type="GO" id="GO:0051301">
    <property type="term" value="P:cell division"/>
    <property type="evidence" value="ECO:0007669"/>
    <property type="project" value="UniProtKB-KW"/>
</dbReference>
<dbReference type="GO" id="GO:0071555">
    <property type="term" value="P:cell wall organization"/>
    <property type="evidence" value="ECO:0007669"/>
    <property type="project" value="UniProtKB-KW"/>
</dbReference>
<dbReference type="GO" id="GO:0030259">
    <property type="term" value="P:lipid glycosylation"/>
    <property type="evidence" value="ECO:0007669"/>
    <property type="project" value="UniProtKB-UniRule"/>
</dbReference>
<dbReference type="GO" id="GO:0009252">
    <property type="term" value="P:peptidoglycan biosynthetic process"/>
    <property type="evidence" value="ECO:0007669"/>
    <property type="project" value="UniProtKB-UniRule"/>
</dbReference>
<dbReference type="GO" id="GO:0008360">
    <property type="term" value="P:regulation of cell shape"/>
    <property type="evidence" value="ECO:0007669"/>
    <property type="project" value="UniProtKB-KW"/>
</dbReference>
<dbReference type="CDD" id="cd03785">
    <property type="entry name" value="GT28_MurG"/>
    <property type="match status" value="1"/>
</dbReference>
<dbReference type="Gene3D" id="3.40.50.2000">
    <property type="entry name" value="Glycogen Phosphorylase B"/>
    <property type="match status" value="2"/>
</dbReference>
<dbReference type="HAMAP" id="MF_00033">
    <property type="entry name" value="MurG"/>
    <property type="match status" value="1"/>
</dbReference>
<dbReference type="InterPro" id="IPR006009">
    <property type="entry name" value="GlcNAc_MurG"/>
</dbReference>
<dbReference type="InterPro" id="IPR007235">
    <property type="entry name" value="Glyco_trans_28_C"/>
</dbReference>
<dbReference type="InterPro" id="IPR004276">
    <property type="entry name" value="GlycoTrans_28_N"/>
</dbReference>
<dbReference type="PANTHER" id="PTHR21015:SF22">
    <property type="entry name" value="GLYCOSYLTRANSFERASE"/>
    <property type="match status" value="1"/>
</dbReference>
<dbReference type="PANTHER" id="PTHR21015">
    <property type="entry name" value="UDP-N-ACETYLGLUCOSAMINE--N-ACETYLMURAMYL-(PENTAPEPTIDE) PYROPHOSPHORYL-UNDECAPRENOL N-ACETYLGLUCOSAMINE TRANSFERASE 1"/>
    <property type="match status" value="1"/>
</dbReference>
<dbReference type="Pfam" id="PF04101">
    <property type="entry name" value="Glyco_tran_28_C"/>
    <property type="match status" value="1"/>
</dbReference>
<dbReference type="Pfam" id="PF03033">
    <property type="entry name" value="Glyco_transf_28"/>
    <property type="match status" value="1"/>
</dbReference>
<dbReference type="SUPFAM" id="SSF53756">
    <property type="entry name" value="UDP-Glycosyltransferase/glycogen phosphorylase"/>
    <property type="match status" value="1"/>
</dbReference>
<reference key="1">
    <citation type="journal article" date="2007" name="Proc. Natl. Acad. Sci. U.S.A.">
        <title>Deep-sea vent epsilon-proteobacterial genomes provide insights into emergence of pathogens.</title>
        <authorList>
            <person name="Nakagawa S."/>
            <person name="Takaki Y."/>
            <person name="Shimamura S."/>
            <person name="Reysenbach A.-L."/>
            <person name="Takai K."/>
            <person name="Horikoshi K."/>
        </authorList>
    </citation>
    <scope>NUCLEOTIDE SEQUENCE [LARGE SCALE GENOMIC DNA]</scope>
    <source>
        <strain>SB155-2</strain>
    </source>
</reference>
<organism>
    <name type="scientific">Nitratiruptor sp. (strain SB155-2)</name>
    <dbReference type="NCBI Taxonomy" id="387092"/>
    <lineage>
        <taxon>Bacteria</taxon>
        <taxon>Pseudomonadati</taxon>
        <taxon>Campylobacterota</taxon>
        <taxon>Epsilonproteobacteria</taxon>
        <taxon>Nautiliales</taxon>
        <taxon>Nitratiruptoraceae</taxon>
        <taxon>Nitratiruptor</taxon>
    </lineage>
</organism>
<comment type="function">
    <text evidence="1">Cell wall formation. Catalyzes the transfer of a GlcNAc subunit on undecaprenyl-pyrophosphoryl-MurNAc-pentapeptide (lipid intermediate I) to form undecaprenyl-pyrophosphoryl-MurNAc-(pentapeptide)GlcNAc (lipid intermediate II).</text>
</comment>
<comment type="catalytic activity">
    <reaction evidence="1">
        <text>di-trans,octa-cis-undecaprenyl diphospho-N-acetyl-alpha-D-muramoyl-L-alanyl-D-glutamyl-meso-2,6-diaminopimeloyl-D-alanyl-D-alanine + UDP-N-acetyl-alpha-D-glucosamine = di-trans,octa-cis-undecaprenyl diphospho-[N-acetyl-alpha-D-glucosaminyl-(1-&gt;4)]-N-acetyl-alpha-D-muramoyl-L-alanyl-D-glutamyl-meso-2,6-diaminopimeloyl-D-alanyl-D-alanine + UDP + H(+)</text>
        <dbReference type="Rhea" id="RHEA:31227"/>
        <dbReference type="ChEBI" id="CHEBI:15378"/>
        <dbReference type="ChEBI" id="CHEBI:57705"/>
        <dbReference type="ChEBI" id="CHEBI:58223"/>
        <dbReference type="ChEBI" id="CHEBI:61387"/>
        <dbReference type="ChEBI" id="CHEBI:61388"/>
        <dbReference type="EC" id="2.4.1.227"/>
    </reaction>
</comment>
<comment type="pathway">
    <text evidence="1">Cell wall biogenesis; peptidoglycan biosynthesis.</text>
</comment>
<comment type="subcellular location">
    <subcellularLocation>
        <location evidence="1">Cell inner membrane</location>
        <topology evidence="1">Peripheral membrane protein</topology>
        <orientation evidence="1">Cytoplasmic side</orientation>
    </subcellularLocation>
</comment>
<comment type="similarity">
    <text evidence="1">Belongs to the glycosyltransferase 28 family. MurG subfamily.</text>
</comment>
<sequence length="333" mass="37361">MRILITGGGTGGHLSVAKSLKEAFKKKDATLYYIGSIQGQDRSWFENDEDFQKKLFFDVEGVVNKKGINKIRALTDIVRASFAAKKLIKNESIDAVVSVGGYSAAAASFAALQLNLPLFIHEQNAVKGKLNRLLSPFAKRVFCSFVPPYDPYPVQNIFYETRRIRKELTTIIFLGGSQGAKQINDLAMSWAKELQKHNIKIIHQTGTRDFERVRSFYAKERIEADVFAFDQNLAQKIVQADFAVSRSGASTLWELATNLLPALYIPYPYAAGDHQKHNALFLYRHDASMVFEGQSPQDILSLNIFSMSENLLPFSRPDGATKIVLSIVKMIEK</sequence>
<name>MURG_NITSB</name>
<gene>
    <name evidence="1" type="primary">murG</name>
    <name type="ordered locus">NIS_1531</name>
</gene>
<keyword id="KW-0131">Cell cycle</keyword>
<keyword id="KW-0132">Cell division</keyword>
<keyword id="KW-0997">Cell inner membrane</keyword>
<keyword id="KW-1003">Cell membrane</keyword>
<keyword id="KW-0133">Cell shape</keyword>
<keyword id="KW-0961">Cell wall biogenesis/degradation</keyword>
<keyword id="KW-0328">Glycosyltransferase</keyword>
<keyword id="KW-0472">Membrane</keyword>
<keyword id="KW-0573">Peptidoglycan synthesis</keyword>
<keyword id="KW-1185">Reference proteome</keyword>
<keyword id="KW-0808">Transferase</keyword>
<proteinExistence type="inferred from homology"/>
<protein>
    <recommendedName>
        <fullName evidence="1">UDP-N-acetylglucosamine--N-acetylmuramyl-(pentapeptide) pyrophosphoryl-undecaprenol N-acetylglucosamine transferase</fullName>
        <ecNumber evidence="1">2.4.1.227</ecNumber>
    </recommendedName>
    <alternativeName>
        <fullName evidence="1">Undecaprenyl-PP-MurNAc-pentapeptide-UDPGlcNAc GlcNAc transferase</fullName>
    </alternativeName>
</protein>